<protein>
    <recommendedName>
        <fullName evidence="1">Elongation factor G</fullName>
        <shortName evidence="1">EF-G</shortName>
    </recommendedName>
</protein>
<feature type="chain" id="PRO_0000091072" description="Elongation factor G">
    <location>
        <begin position="1"/>
        <end position="705"/>
    </location>
</feature>
<feature type="domain" description="tr-type G">
    <location>
        <begin position="7"/>
        <end position="287"/>
    </location>
</feature>
<feature type="binding site" evidence="1">
    <location>
        <begin position="16"/>
        <end position="23"/>
    </location>
    <ligand>
        <name>GTP</name>
        <dbReference type="ChEBI" id="CHEBI:37565"/>
    </ligand>
</feature>
<feature type="binding site" evidence="1">
    <location>
        <begin position="84"/>
        <end position="88"/>
    </location>
    <ligand>
        <name>GTP</name>
        <dbReference type="ChEBI" id="CHEBI:37565"/>
    </ligand>
</feature>
<feature type="binding site" evidence="1">
    <location>
        <begin position="138"/>
        <end position="141"/>
    </location>
    <ligand>
        <name>GTP</name>
        <dbReference type="ChEBI" id="CHEBI:37565"/>
    </ligand>
</feature>
<dbReference type="EMBL" id="AE015928">
    <property type="protein sequence ID" value="AAO77835.1"/>
    <property type="molecule type" value="Genomic_DNA"/>
</dbReference>
<dbReference type="RefSeq" id="NP_811641.1">
    <property type="nucleotide sequence ID" value="NC_004663.1"/>
</dbReference>
<dbReference type="RefSeq" id="WP_008762033.1">
    <property type="nucleotide sequence ID" value="NZ_UYXG01000001.1"/>
</dbReference>
<dbReference type="SMR" id="Q8A474"/>
<dbReference type="FunCoup" id="Q8A474">
    <property type="interactions" value="564"/>
</dbReference>
<dbReference type="STRING" id="226186.BT_2729"/>
<dbReference type="PaxDb" id="226186-BT_2729"/>
<dbReference type="EnsemblBacteria" id="AAO77835">
    <property type="protein sequence ID" value="AAO77835"/>
    <property type="gene ID" value="BT_2729"/>
</dbReference>
<dbReference type="GeneID" id="69587589"/>
<dbReference type="KEGG" id="bth:BT_2729"/>
<dbReference type="PATRIC" id="fig|226186.12.peg.2772"/>
<dbReference type="eggNOG" id="COG0480">
    <property type="taxonomic scope" value="Bacteria"/>
</dbReference>
<dbReference type="HOGENOM" id="CLU_002794_4_1_10"/>
<dbReference type="InParanoid" id="Q8A474"/>
<dbReference type="OrthoDB" id="9801591at2"/>
<dbReference type="Proteomes" id="UP000001414">
    <property type="component" value="Chromosome"/>
</dbReference>
<dbReference type="GO" id="GO:0005737">
    <property type="term" value="C:cytoplasm"/>
    <property type="evidence" value="ECO:0007669"/>
    <property type="project" value="UniProtKB-SubCell"/>
</dbReference>
<dbReference type="GO" id="GO:0005525">
    <property type="term" value="F:GTP binding"/>
    <property type="evidence" value="ECO:0007669"/>
    <property type="project" value="UniProtKB-UniRule"/>
</dbReference>
<dbReference type="GO" id="GO:0003924">
    <property type="term" value="F:GTPase activity"/>
    <property type="evidence" value="ECO:0007669"/>
    <property type="project" value="InterPro"/>
</dbReference>
<dbReference type="GO" id="GO:0003746">
    <property type="term" value="F:translation elongation factor activity"/>
    <property type="evidence" value="ECO:0007669"/>
    <property type="project" value="UniProtKB-UniRule"/>
</dbReference>
<dbReference type="GO" id="GO:0032790">
    <property type="term" value="P:ribosome disassembly"/>
    <property type="evidence" value="ECO:0000318"/>
    <property type="project" value="GO_Central"/>
</dbReference>
<dbReference type="CDD" id="cd01886">
    <property type="entry name" value="EF-G"/>
    <property type="match status" value="1"/>
</dbReference>
<dbReference type="CDD" id="cd16262">
    <property type="entry name" value="EFG_III"/>
    <property type="match status" value="1"/>
</dbReference>
<dbReference type="CDD" id="cd01434">
    <property type="entry name" value="EFG_mtEFG1_IV"/>
    <property type="match status" value="1"/>
</dbReference>
<dbReference type="CDD" id="cd03713">
    <property type="entry name" value="EFG_mtEFG_C"/>
    <property type="match status" value="1"/>
</dbReference>
<dbReference type="CDD" id="cd04088">
    <property type="entry name" value="EFG_mtEFG_II"/>
    <property type="match status" value="1"/>
</dbReference>
<dbReference type="FunFam" id="2.40.30.10:FF:000006">
    <property type="entry name" value="Elongation factor G"/>
    <property type="match status" value="1"/>
</dbReference>
<dbReference type="FunFam" id="3.30.230.10:FF:000003">
    <property type="entry name" value="Elongation factor G"/>
    <property type="match status" value="1"/>
</dbReference>
<dbReference type="FunFam" id="3.30.70.240:FF:000001">
    <property type="entry name" value="Elongation factor G"/>
    <property type="match status" value="1"/>
</dbReference>
<dbReference type="FunFam" id="3.30.70.870:FF:000001">
    <property type="entry name" value="Elongation factor G"/>
    <property type="match status" value="1"/>
</dbReference>
<dbReference type="FunFam" id="3.40.50.300:FF:000029">
    <property type="entry name" value="Elongation factor G"/>
    <property type="match status" value="1"/>
</dbReference>
<dbReference type="Gene3D" id="3.30.230.10">
    <property type="match status" value="1"/>
</dbReference>
<dbReference type="Gene3D" id="3.30.70.240">
    <property type="match status" value="1"/>
</dbReference>
<dbReference type="Gene3D" id="3.30.70.870">
    <property type="entry name" value="Elongation Factor G (Translational Gtpase), domain 3"/>
    <property type="match status" value="1"/>
</dbReference>
<dbReference type="Gene3D" id="3.40.50.300">
    <property type="entry name" value="P-loop containing nucleotide triphosphate hydrolases"/>
    <property type="match status" value="1"/>
</dbReference>
<dbReference type="Gene3D" id="2.40.30.10">
    <property type="entry name" value="Translation factors"/>
    <property type="match status" value="1"/>
</dbReference>
<dbReference type="HAMAP" id="MF_00054_B">
    <property type="entry name" value="EF_G_EF_2_B"/>
    <property type="match status" value="1"/>
</dbReference>
<dbReference type="InterPro" id="IPR041095">
    <property type="entry name" value="EFG_II"/>
</dbReference>
<dbReference type="InterPro" id="IPR009022">
    <property type="entry name" value="EFG_III"/>
</dbReference>
<dbReference type="InterPro" id="IPR035647">
    <property type="entry name" value="EFG_III/V"/>
</dbReference>
<dbReference type="InterPro" id="IPR047872">
    <property type="entry name" value="EFG_IV"/>
</dbReference>
<dbReference type="InterPro" id="IPR035649">
    <property type="entry name" value="EFG_V"/>
</dbReference>
<dbReference type="InterPro" id="IPR000640">
    <property type="entry name" value="EFG_V-like"/>
</dbReference>
<dbReference type="InterPro" id="IPR004161">
    <property type="entry name" value="EFTu-like_2"/>
</dbReference>
<dbReference type="InterPro" id="IPR031157">
    <property type="entry name" value="G_TR_CS"/>
</dbReference>
<dbReference type="InterPro" id="IPR027417">
    <property type="entry name" value="P-loop_NTPase"/>
</dbReference>
<dbReference type="InterPro" id="IPR020568">
    <property type="entry name" value="Ribosomal_Su5_D2-typ_SF"/>
</dbReference>
<dbReference type="InterPro" id="IPR014721">
    <property type="entry name" value="Ribsml_uS5_D2-typ_fold_subgr"/>
</dbReference>
<dbReference type="InterPro" id="IPR005225">
    <property type="entry name" value="Small_GTP-bd"/>
</dbReference>
<dbReference type="InterPro" id="IPR000795">
    <property type="entry name" value="T_Tr_GTP-bd_dom"/>
</dbReference>
<dbReference type="InterPro" id="IPR009000">
    <property type="entry name" value="Transl_B-barrel_sf"/>
</dbReference>
<dbReference type="InterPro" id="IPR004540">
    <property type="entry name" value="Transl_elong_EFG/EF2"/>
</dbReference>
<dbReference type="InterPro" id="IPR005517">
    <property type="entry name" value="Transl_elong_EFG/EF2_IV"/>
</dbReference>
<dbReference type="NCBIfam" id="TIGR00484">
    <property type="entry name" value="EF-G"/>
    <property type="match status" value="1"/>
</dbReference>
<dbReference type="NCBIfam" id="NF009381">
    <property type="entry name" value="PRK12740.1-5"/>
    <property type="match status" value="1"/>
</dbReference>
<dbReference type="NCBIfam" id="TIGR00231">
    <property type="entry name" value="small_GTP"/>
    <property type="match status" value="1"/>
</dbReference>
<dbReference type="PANTHER" id="PTHR43261:SF1">
    <property type="entry name" value="RIBOSOME-RELEASING FACTOR 2, MITOCHONDRIAL"/>
    <property type="match status" value="1"/>
</dbReference>
<dbReference type="PANTHER" id="PTHR43261">
    <property type="entry name" value="TRANSLATION ELONGATION FACTOR G-RELATED"/>
    <property type="match status" value="1"/>
</dbReference>
<dbReference type="Pfam" id="PF00679">
    <property type="entry name" value="EFG_C"/>
    <property type="match status" value="1"/>
</dbReference>
<dbReference type="Pfam" id="PF14492">
    <property type="entry name" value="EFG_III"/>
    <property type="match status" value="1"/>
</dbReference>
<dbReference type="Pfam" id="PF03764">
    <property type="entry name" value="EFG_IV"/>
    <property type="match status" value="1"/>
</dbReference>
<dbReference type="Pfam" id="PF00009">
    <property type="entry name" value="GTP_EFTU"/>
    <property type="match status" value="1"/>
</dbReference>
<dbReference type="Pfam" id="PF03144">
    <property type="entry name" value="GTP_EFTU_D2"/>
    <property type="match status" value="1"/>
</dbReference>
<dbReference type="PRINTS" id="PR00315">
    <property type="entry name" value="ELONGATNFCT"/>
</dbReference>
<dbReference type="SMART" id="SM00838">
    <property type="entry name" value="EFG_C"/>
    <property type="match status" value="1"/>
</dbReference>
<dbReference type="SMART" id="SM00889">
    <property type="entry name" value="EFG_IV"/>
    <property type="match status" value="1"/>
</dbReference>
<dbReference type="SUPFAM" id="SSF54980">
    <property type="entry name" value="EF-G C-terminal domain-like"/>
    <property type="match status" value="2"/>
</dbReference>
<dbReference type="SUPFAM" id="SSF52540">
    <property type="entry name" value="P-loop containing nucleoside triphosphate hydrolases"/>
    <property type="match status" value="1"/>
</dbReference>
<dbReference type="SUPFAM" id="SSF54211">
    <property type="entry name" value="Ribosomal protein S5 domain 2-like"/>
    <property type="match status" value="1"/>
</dbReference>
<dbReference type="SUPFAM" id="SSF50447">
    <property type="entry name" value="Translation proteins"/>
    <property type="match status" value="1"/>
</dbReference>
<dbReference type="PROSITE" id="PS00301">
    <property type="entry name" value="G_TR_1"/>
    <property type="match status" value="1"/>
</dbReference>
<dbReference type="PROSITE" id="PS51722">
    <property type="entry name" value="G_TR_2"/>
    <property type="match status" value="1"/>
</dbReference>
<evidence type="ECO:0000255" key="1">
    <source>
        <dbReference type="HAMAP-Rule" id="MF_00054"/>
    </source>
</evidence>
<comment type="function">
    <text evidence="1">Catalyzes the GTP-dependent ribosomal translocation step during translation elongation. During this step, the ribosome changes from the pre-translocational (PRE) to the post-translocational (POST) state as the newly formed A-site-bound peptidyl-tRNA and P-site-bound deacylated tRNA move to the P and E sites, respectively. Catalyzes the coordinated movement of the two tRNA molecules, the mRNA and conformational changes in the ribosome.</text>
</comment>
<comment type="subcellular location">
    <subcellularLocation>
        <location evidence="1">Cytoplasm</location>
    </subcellularLocation>
</comment>
<comment type="similarity">
    <text evidence="1">Belongs to the TRAFAC class translation factor GTPase superfamily. Classic translation factor GTPase family. EF-G/EF-2 subfamily.</text>
</comment>
<sequence>MAKTDLHLTRNIGIMAHIDAGKTTTSERILFYTGLTHKIGEVHDGAATMDWMEQEQERGITITSAATTTRWKYAGDTYKINLIDTPGHVDFTAEVERSLRILDGAVAAYCAVGGVEPQSETVWRQADKYNVPRIAYVNKMDRSGADFFEVVRQMKAVLGANPCPIVVPIGAEETFKGLVDLIKMKAIYWHDETMGADYTVEEIPADLVDEANEWRDKMLEKVAEFDDALMEKYFDDPSTITEEEVLRALRNATVQMAVVPMLCGSSFKNKGVQTLLDYVCAFLPSPLDTENVIGTNPNTGAEEDRKPSDDEKTSALAFKIATDPYVGRLTFFRVYSGKIEAGSYIYNSRSGKKERVSRLFQMHSNKQNPVEVIGAGDIGAGVGFKDIHTGDTLCDETAPIVLESMDFPEPVIGIAVEPKTQKDMDKLSNGLAKLAEEDPTFTVKTDEQTGQTVISGMGELHLDIIIDRLKREFKVECNQGKPQVNYKEAITKTVDLREVYKKQSGGRGKFADIIVKIGPVDEDFKEGGLQFIDEVKGGNIPKEFIPSVQKGFTSAMKNGVLAGYPLDSMKVTLIDGSFHPVDSDQLSFEICAIQAYKNACAKAGPVLMEPIMKLEVVTPEENMGDVIGDLNKRRGQVEGMESSRSGARIVKAMVPLAEMFGYVTALRTITSGRATSSMVYSHHAQVSNSIAKAVLEEVKGRADLL</sequence>
<reference key="1">
    <citation type="journal article" date="2003" name="Science">
        <title>A genomic view of the human-Bacteroides thetaiotaomicron symbiosis.</title>
        <authorList>
            <person name="Xu J."/>
            <person name="Bjursell M.K."/>
            <person name="Himrod J."/>
            <person name="Deng S."/>
            <person name="Carmichael L.K."/>
            <person name="Chiang H.C."/>
            <person name="Hooper L.V."/>
            <person name="Gordon J.I."/>
        </authorList>
    </citation>
    <scope>NUCLEOTIDE SEQUENCE [LARGE SCALE GENOMIC DNA]</scope>
    <source>
        <strain>ATCC 29148 / DSM 2079 / JCM 5827 / CCUG 10774 / NCTC 10582 / VPI-5482 / E50</strain>
    </source>
</reference>
<keyword id="KW-0963">Cytoplasm</keyword>
<keyword id="KW-0251">Elongation factor</keyword>
<keyword id="KW-0342">GTP-binding</keyword>
<keyword id="KW-0547">Nucleotide-binding</keyword>
<keyword id="KW-0648">Protein biosynthesis</keyword>
<keyword id="KW-1185">Reference proteome</keyword>
<organism>
    <name type="scientific">Bacteroides thetaiotaomicron (strain ATCC 29148 / DSM 2079 / JCM 5827 / CCUG 10774 / NCTC 10582 / VPI-5482 / E50)</name>
    <dbReference type="NCBI Taxonomy" id="226186"/>
    <lineage>
        <taxon>Bacteria</taxon>
        <taxon>Pseudomonadati</taxon>
        <taxon>Bacteroidota</taxon>
        <taxon>Bacteroidia</taxon>
        <taxon>Bacteroidales</taxon>
        <taxon>Bacteroidaceae</taxon>
        <taxon>Bacteroides</taxon>
    </lineage>
</organism>
<name>EFG_BACTN</name>
<proteinExistence type="inferred from homology"/>
<accession>Q8A474</accession>
<gene>
    <name evidence="1" type="primary">fusA</name>
    <name type="ordered locus">BT_2729</name>
</gene>